<keyword id="KW-1005">Bacterial flagellum biogenesis</keyword>
<keyword id="KW-0143">Chaperone</keyword>
<keyword id="KW-0963">Cytoplasm</keyword>
<keyword id="KW-0678">Repressor</keyword>
<keyword id="KW-0804">Transcription</keyword>
<keyword id="KW-0805">Transcription regulation</keyword>
<proteinExistence type="inferred from homology"/>
<comment type="function">
    <text evidence="1">Dual-function protein that regulates the transcription of class 2 flagellar operons and that also acts as an export chaperone for the filament-capping protein FliD. As a transcriptional regulator, acts as an anti-FlhDC factor; it directly binds FlhC, thus inhibiting the binding of the FlhC/FlhD complex to class 2 promoters, resulting in decreased expression of class 2 flagellar operons. As a chaperone, effects FliD transition to the membrane by preventing its premature polymerization, and by directing it to the export apparatus.</text>
</comment>
<comment type="subunit">
    <text evidence="1">Homodimer. Interacts with FliD and FlhC.</text>
</comment>
<comment type="subcellular location">
    <subcellularLocation>
        <location evidence="1">Cytoplasm</location>
        <location evidence="1">Cytosol</location>
    </subcellularLocation>
</comment>
<comment type="similarity">
    <text evidence="1">Belongs to the FliT family.</text>
</comment>
<evidence type="ECO:0000255" key="1">
    <source>
        <dbReference type="HAMAP-Rule" id="MF_01180"/>
    </source>
</evidence>
<organism>
    <name type="scientific">Serratia proteamaculans (strain 568)</name>
    <dbReference type="NCBI Taxonomy" id="399741"/>
    <lineage>
        <taxon>Bacteria</taxon>
        <taxon>Pseudomonadati</taxon>
        <taxon>Pseudomonadota</taxon>
        <taxon>Gammaproteobacteria</taxon>
        <taxon>Enterobacterales</taxon>
        <taxon>Yersiniaceae</taxon>
        <taxon>Serratia</taxon>
    </lineage>
</organism>
<feature type="chain" id="PRO_0000353891" description="Flagellar protein FliT">
    <location>
        <begin position="1"/>
        <end position="122"/>
    </location>
</feature>
<feature type="region of interest" description="Required for homodimerization" evidence="1">
    <location>
        <begin position="1"/>
        <end position="50"/>
    </location>
</feature>
<feature type="region of interest" description="FliD binding" evidence="1">
    <location>
        <begin position="60"/>
        <end position="98"/>
    </location>
</feature>
<sequence length="122" mass="13945">MERQQQLLAAYQQIHSLSSQMIALAQTERWEDLVELELAYVTAVESTAAFTGQAGPSMALQELLRNKLQQILDNETELKRLLQQRMDQLKELIGQSTRQNVVNSTYGQFNDRALLLGEPQIR</sequence>
<gene>
    <name evidence="1" type="primary">fliT</name>
    <name type="ordered locus">Spro_2943</name>
</gene>
<reference key="1">
    <citation type="submission" date="2007-09" db="EMBL/GenBank/DDBJ databases">
        <title>Complete sequence of chromosome of Serratia proteamaculans 568.</title>
        <authorList>
            <consortium name="US DOE Joint Genome Institute"/>
            <person name="Copeland A."/>
            <person name="Lucas S."/>
            <person name="Lapidus A."/>
            <person name="Barry K."/>
            <person name="Glavina del Rio T."/>
            <person name="Dalin E."/>
            <person name="Tice H."/>
            <person name="Pitluck S."/>
            <person name="Chain P."/>
            <person name="Malfatti S."/>
            <person name="Shin M."/>
            <person name="Vergez L."/>
            <person name="Schmutz J."/>
            <person name="Larimer F."/>
            <person name="Land M."/>
            <person name="Hauser L."/>
            <person name="Kyrpides N."/>
            <person name="Kim E."/>
            <person name="Taghavi S."/>
            <person name="Newman L."/>
            <person name="Vangronsveld J."/>
            <person name="van der Lelie D."/>
            <person name="Richardson P."/>
        </authorList>
    </citation>
    <scope>NUCLEOTIDE SEQUENCE [LARGE SCALE GENOMIC DNA]</scope>
    <source>
        <strain>568</strain>
    </source>
</reference>
<accession>A8GG04</accession>
<name>FLIT_SERP5</name>
<protein>
    <recommendedName>
        <fullName evidence="1">Flagellar protein FliT</fullName>
    </recommendedName>
</protein>
<dbReference type="EMBL" id="CP000826">
    <property type="protein sequence ID" value="ABV42044.1"/>
    <property type="molecule type" value="Genomic_DNA"/>
</dbReference>
<dbReference type="SMR" id="A8GG04"/>
<dbReference type="STRING" id="399741.Spro_2943"/>
<dbReference type="KEGG" id="spe:Spro_2943"/>
<dbReference type="eggNOG" id="ENOG5032ZV7">
    <property type="taxonomic scope" value="Bacteria"/>
</dbReference>
<dbReference type="HOGENOM" id="CLU_155793_1_0_6"/>
<dbReference type="OrthoDB" id="6494117at2"/>
<dbReference type="GO" id="GO:0005829">
    <property type="term" value="C:cytosol"/>
    <property type="evidence" value="ECO:0007669"/>
    <property type="project" value="UniProtKB-SubCell"/>
</dbReference>
<dbReference type="GO" id="GO:0044781">
    <property type="term" value="P:bacterial-type flagellum organization"/>
    <property type="evidence" value="ECO:0007669"/>
    <property type="project" value="UniProtKB-KW"/>
</dbReference>
<dbReference type="GO" id="GO:1902209">
    <property type="term" value="P:negative regulation of bacterial-type flagellum assembly"/>
    <property type="evidence" value="ECO:0007669"/>
    <property type="project" value="UniProtKB-UniRule"/>
</dbReference>
<dbReference type="GO" id="GO:0006457">
    <property type="term" value="P:protein folding"/>
    <property type="evidence" value="ECO:0007669"/>
    <property type="project" value="UniProtKB-UniRule"/>
</dbReference>
<dbReference type="Gene3D" id="1.20.58.380">
    <property type="entry name" value="Flagellar protein flit"/>
    <property type="match status" value="1"/>
</dbReference>
<dbReference type="HAMAP" id="MF_01180">
    <property type="entry name" value="FliT"/>
    <property type="match status" value="1"/>
</dbReference>
<dbReference type="InterPro" id="IPR008622">
    <property type="entry name" value="FliT"/>
</dbReference>
<dbReference type="NCBIfam" id="NF007836">
    <property type="entry name" value="PRK10548.1"/>
    <property type="match status" value="1"/>
</dbReference>
<dbReference type="Pfam" id="PF05400">
    <property type="entry name" value="FliT"/>
    <property type="match status" value="1"/>
</dbReference>